<protein>
    <recommendedName>
        <fullName>Fin bud initiation factor homolog</fullName>
    </recommendedName>
</protein>
<organism>
    <name type="scientific">Equus caballus</name>
    <name type="common">Horse</name>
    <dbReference type="NCBI Taxonomy" id="9796"/>
    <lineage>
        <taxon>Eukaryota</taxon>
        <taxon>Metazoa</taxon>
        <taxon>Chordata</taxon>
        <taxon>Craniata</taxon>
        <taxon>Vertebrata</taxon>
        <taxon>Euteleostomi</taxon>
        <taxon>Mammalia</taxon>
        <taxon>Eutheria</taxon>
        <taxon>Laurasiatheria</taxon>
        <taxon>Perissodactyla</taxon>
        <taxon>Equidae</taxon>
        <taxon>Equus</taxon>
    </lineage>
</organism>
<reference key="1">
    <citation type="submission" date="2007-04" db="EMBL/GenBank/DDBJ databases">
        <title>Cloning of genes expressed in equine tendon.</title>
        <authorList>
            <person name="Hasegawa T."/>
            <person name="Hayashi K."/>
            <person name="Kagawa Y."/>
            <person name="Akiyama Y."/>
            <person name="Suzuki Y."/>
            <person name="Sugano S."/>
            <person name="Ishida N."/>
        </authorList>
    </citation>
    <scope>NUCLEOTIDE SEQUENCE [MRNA]</scope>
    <source>
        <tissue>Tendon</tissue>
    </source>
</reference>
<sequence>MVFLKFLWMGFFCYLCQGYFDGPLYPEMSNGTLHHYFVPDGDYEENDDPEKCQLLFRVSDHRRCSQGEGSQASSLLSLTLREEFTVLGRQVEDAGRVLEGISKSISYDLDGEESYGKYLRRESHQIGDAYSNSDKSLTELESKFKQGQEQDSRQESRLNEDFLGMLVHTRSLLKETLDISAGLRDKYELLALTIRSHGTRLGRLKNDYLKV</sequence>
<accession>A4UZ23</accession>
<feature type="signal peptide" evidence="1">
    <location>
        <begin position="1"/>
        <end position="18"/>
    </location>
</feature>
<feature type="chain" id="PRO_0000349210" description="Fin bud initiation factor homolog">
    <location>
        <begin position="19"/>
        <end position="211"/>
    </location>
</feature>
<feature type="glycosylation site" description="N-linked (GlcNAc...) asparagine" evidence="2">
    <location>
        <position position="30"/>
    </location>
</feature>
<feature type="disulfide bond" description="Interchain" evidence="1">
    <location>
        <position position="52"/>
    </location>
</feature>
<feature type="disulfide bond" description="Interchain" evidence="1">
    <location>
        <position position="64"/>
    </location>
</feature>
<comment type="subunit">
    <text evidence="1">Homodimer; disulfide-linked. Seems to also exist as monomers (By similarity).</text>
</comment>
<comment type="subcellular location">
    <subcellularLocation>
        <location evidence="1">Secreted</location>
    </subcellularLocation>
    <subcellularLocation>
        <location evidence="1">Golgi apparatus</location>
    </subcellularLocation>
    <subcellularLocation>
        <location evidence="1">Endoplasmic reticulum</location>
    </subcellularLocation>
</comment>
<comment type="similarity">
    <text evidence="3">Belongs to the FIBIN family.</text>
</comment>
<proteinExistence type="evidence at transcript level"/>
<name>FIBIN_HORSE</name>
<keyword id="KW-1015">Disulfide bond</keyword>
<keyword id="KW-0256">Endoplasmic reticulum</keyword>
<keyword id="KW-0325">Glycoprotein</keyword>
<keyword id="KW-0333">Golgi apparatus</keyword>
<keyword id="KW-1185">Reference proteome</keyword>
<keyword id="KW-0964">Secreted</keyword>
<keyword id="KW-0732">Signal</keyword>
<evidence type="ECO:0000250" key="1"/>
<evidence type="ECO:0000255" key="2"/>
<evidence type="ECO:0000305" key="3"/>
<gene>
    <name type="primary">FIBIN</name>
</gene>
<dbReference type="EMBL" id="AB302195">
    <property type="protein sequence ID" value="BAF57221.1"/>
    <property type="molecule type" value="mRNA"/>
</dbReference>
<dbReference type="RefSeq" id="NP_001092913.1">
    <property type="nucleotide sequence ID" value="NM_001099443.1"/>
</dbReference>
<dbReference type="SMR" id="A4UZ23"/>
<dbReference type="FunCoup" id="A4UZ23">
    <property type="interactions" value="60"/>
</dbReference>
<dbReference type="STRING" id="9796.ENSECAP00000003550"/>
<dbReference type="GlyCosmos" id="A4UZ23">
    <property type="glycosylation" value="1 site, No reported glycans"/>
</dbReference>
<dbReference type="PaxDb" id="9796-ENSECAP00000003550"/>
<dbReference type="Ensembl" id="ENSECAT00000086991.1">
    <property type="protein sequence ID" value="ENSECAP00000079267.1"/>
    <property type="gene ID" value="ENSECAG00000005106.4"/>
</dbReference>
<dbReference type="GeneID" id="100057578"/>
<dbReference type="KEGG" id="ecb:100057578"/>
<dbReference type="CTD" id="387758"/>
<dbReference type="VGNC" id="VGNC:56357">
    <property type="gene designation" value="FIBIN"/>
</dbReference>
<dbReference type="GeneTree" id="ENSGT00390000007623"/>
<dbReference type="HOGENOM" id="CLU_1323584_0_0_1"/>
<dbReference type="InParanoid" id="A4UZ23"/>
<dbReference type="OrthoDB" id="9434858at2759"/>
<dbReference type="TreeFam" id="TF331989"/>
<dbReference type="Proteomes" id="UP000002281">
    <property type="component" value="Chromosome 7"/>
</dbReference>
<dbReference type="GO" id="GO:0005783">
    <property type="term" value="C:endoplasmic reticulum"/>
    <property type="evidence" value="ECO:0007669"/>
    <property type="project" value="UniProtKB-SubCell"/>
</dbReference>
<dbReference type="GO" id="GO:0005576">
    <property type="term" value="C:extracellular region"/>
    <property type="evidence" value="ECO:0007669"/>
    <property type="project" value="UniProtKB-SubCell"/>
</dbReference>
<dbReference type="GO" id="GO:0005794">
    <property type="term" value="C:Golgi apparatus"/>
    <property type="evidence" value="ECO:0007669"/>
    <property type="project" value="UniProtKB-SubCell"/>
</dbReference>
<dbReference type="InterPro" id="IPR026772">
    <property type="entry name" value="Fibin"/>
</dbReference>
<dbReference type="PANTHER" id="PTHR31185">
    <property type="entry name" value="FIN BUD INITIATION FACTOR FIBIN"/>
    <property type="match status" value="1"/>
</dbReference>
<dbReference type="PANTHER" id="PTHR31185:SF0">
    <property type="entry name" value="FIN BUD INITIATION FACTOR HOMOLOG"/>
    <property type="match status" value="1"/>
</dbReference>
<dbReference type="Pfam" id="PF15819">
    <property type="entry name" value="Fibin"/>
    <property type="match status" value="1"/>
</dbReference>